<sequence>MTAAAPSQQRPAAARARNLPWVEKYRPQTLADLISHQDILSTIQKFISEDRLPHLLLYGPPGTGKTSTILACAKQLYKDKEFGSMVLELNASDDRGIDIVRGPILSFASTRTIFKKGFKLVILDEADAMTQDAQNALRRVIEKFTENTRFCLICNYLSKIIPALQSRCTRFRFGPLTPELMVPRLEHVVQEENVDISEDGMKALVTLSSGDMRRALNILQSTNMAFGKVTEETVYTCTGHPLKTDIANILDWMLNQDFTTAYKNIMELKTLKGLALHDILTEVHLFVHRVDFPSSVRIHLLTKMADIEYRLSVGTSEKIQLSSLIAAFQVTRDLIVAEA</sequence>
<gene>
    <name type="primary">Rfc5</name>
</gene>
<reference key="1">
    <citation type="journal article" date="2005" name="Science">
        <title>The transcriptional landscape of the mammalian genome.</title>
        <authorList>
            <person name="Carninci P."/>
            <person name="Kasukawa T."/>
            <person name="Katayama S."/>
            <person name="Gough J."/>
            <person name="Frith M.C."/>
            <person name="Maeda N."/>
            <person name="Oyama R."/>
            <person name="Ravasi T."/>
            <person name="Lenhard B."/>
            <person name="Wells C."/>
            <person name="Kodzius R."/>
            <person name="Shimokawa K."/>
            <person name="Bajic V.B."/>
            <person name="Brenner S.E."/>
            <person name="Batalov S."/>
            <person name="Forrest A.R."/>
            <person name="Zavolan M."/>
            <person name="Davis M.J."/>
            <person name="Wilming L.G."/>
            <person name="Aidinis V."/>
            <person name="Allen J.E."/>
            <person name="Ambesi-Impiombato A."/>
            <person name="Apweiler R."/>
            <person name="Aturaliya R.N."/>
            <person name="Bailey T.L."/>
            <person name="Bansal M."/>
            <person name="Baxter L."/>
            <person name="Beisel K.W."/>
            <person name="Bersano T."/>
            <person name="Bono H."/>
            <person name="Chalk A.M."/>
            <person name="Chiu K.P."/>
            <person name="Choudhary V."/>
            <person name="Christoffels A."/>
            <person name="Clutterbuck D.R."/>
            <person name="Crowe M.L."/>
            <person name="Dalla E."/>
            <person name="Dalrymple B.P."/>
            <person name="de Bono B."/>
            <person name="Della Gatta G."/>
            <person name="di Bernardo D."/>
            <person name="Down T."/>
            <person name="Engstrom P."/>
            <person name="Fagiolini M."/>
            <person name="Faulkner G."/>
            <person name="Fletcher C.F."/>
            <person name="Fukushima T."/>
            <person name="Furuno M."/>
            <person name="Futaki S."/>
            <person name="Gariboldi M."/>
            <person name="Georgii-Hemming P."/>
            <person name="Gingeras T.R."/>
            <person name="Gojobori T."/>
            <person name="Green R.E."/>
            <person name="Gustincich S."/>
            <person name="Harbers M."/>
            <person name="Hayashi Y."/>
            <person name="Hensch T.K."/>
            <person name="Hirokawa N."/>
            <person name="Hill D."/>
            <person name="Huminiecki L."/>
            <person name="Iacono M."/>
            <person name="Ikeo K."/>
            <person name="Iwama A."/>
            <person name="Ishikawa T."/>
            <person name="Jakt M."/>
            <person name="Kanapin A."/>
            <person name="Katoh M."/>
            <person name="Kawasawa Y."/>
            <person name="Kelso J."/>
            <person name="Kitamura H."/>
            <person name="Kitano H."/>
            <person name="Kollias G."/>
            <person name="Krishnan S.P."/>
            <person name="Kruger A."/>
            <person name="Kummerfeld S.K."/>
            <person name="Kurochkin I.V."/>
            <person name="Lareau L.F."/>
            <person name="Lazarevic D."/>
            <person name="Lipovich L."/>
            <person name="Liu J."/>
            <person name="Liuni S."/>
            <person name="McWilliam S."/>
            <person name="Madan Babu M."/>
            <person name="Madera M."/>
            <person name="Marchionni L."/>
            <person name="Matsuda H."/>
            <person name="Matsuzawa S."/>
            <person name="Miki H."/>
            <person name="Mignone F."/>
            <person name="Miyake S."/>
            <person name="Morris K."/>
            <person name="Mottagui-Tabar S."/>
            <person name="Mulder N."/>
            <person name="Nakano N."/>
            <person name="Nakauchi H."/>
            <person name="Ng P."/>
            <person name="Nilsson R."/>
            <person name="Nishiguchi S."/>
            <person name="Nishikawa S."/>
            <person name="Nori F."/>
            <person name="Ohara O."/>
            <person name="Okazaki Y."/>
            <person name="Orlando V."/>
            <person name="Pang K.C."/>
            <person name="Pavan W.J."/>
            <person name="Pavesi G."/>
            <person name="Pesole G."/>
            <person name="Petrovsky N."/>
            <person name="Piazza S."/>
            <person name="Reed J."/>
            <person name="Reid J.F."/>
            <person name="Ring B.Z."/>
            <person name="Ringwald M."/>
            <person name="Rost B."/>
            <person name="Ruan Y."/>
            <person name="Salzberg S.L."/>
            <person name="Sandelin A."/>
            <person name="Schneider C."/>
            <person name="Schoenbach C."/>
            <person name="Sekiguchi K."/>
            <person name="Semple C.A."/>
            <person name="Seno S."/>
            <person name="Sessa L."/>
            <person name="Sheng Y."/>
            <person name="Shibata Y."/>
            <person name="Shimada H."/>
            <person name="Shimada K."/>
            <person name="Silva D."/>
            <person name="Sinclair B."/>
            <person name="Sperling S."/>
            <person name="Stupka E."/>
            <person name="Sugiura K."/>
            <person name="Sultana R."/>
            <person name="Takenaka Y."/>
            <person name="Taki K."/>
            <person name="Tammoja K."/>
            <person name="Tan S.L."/>
            <person name="Tang S."/>
            <person name="Taylor M.S."/>
            <person name="Tegner J."/>
            <person name="Teichmann S.A."/>
            <person name="Ueda H.R."/>
            <person name="van Nimwegen E."/>
            <person name="Verardo R."/>
            <person name="Wei C.L."/>
            <person name="Yagi K."/>
            <person name="Yamanishi H."/>
            <person name="Zabarovsky E."/>
            <person name="Zhu S."/>
            <person name="Zimmer A."/>
            <person name="Hide W."/>
            <person name="Bult C."/>
            <person name="Grimmond S.M."/>
            <person name="Teasdale R.D."/>
            <person name="Liu E.T."/>
            <person name="Brusic V."/>
            <person name="Quackenbush J."/>
            <person name="Wahlestedt C."/>
            <person name="Mattick J.S."/>
            <person name="Hume D.A."/>
            <person name="Kai C."/>
            <person name="Sasaki D."/>
            <person name="Tomaru Y."/>
            <person name="Fukuda S."/>
            <person name="Kanamori-Katayama M."/>
            <person name="Suzuki M."/>
            <person name="Aoki J."/>
            <person name="Arakawa T."/>
            <person name="Iida J."/>
            <person name="Imamura K."/>
            <person name="Itoh M."/>
            <person name="Kato T."/>
            <person name="Kawaji H."/>
            <person name="Kawagashira N."/>
            <person name="Kawashima T."/>
            <person name="Kojima M."/>
            <person name="Kondo S."/>
            <person name="Konno H."/>
            <person name="Nakano K."/>
            <person name="Ninomiya N."/>
            <person name="Nishio T."/>
            <person name="Okada M."/>
            <person name="Plessy C."/>
            <person name="Shibata K."/>
            <person name="Shiraki T."/>
            <person name="Suzuki S."/>
            <person name="Tagami M."/>
            <person name="Waki K."/>
            <person name="Watahiki A."/>
            <person name="Okamura-Oho Y."/>
            <person name="Suzuki H."/>
            <person name="Kawai J."/>
            <person name="Hayashizaki Y."/>
        </authorList>
    </citation>
    <scope>NUCLEOTIDE SEQUENCE [LARGE SCALE MRNA]</scope>
    <source>
        <strain>C57BL/6J</strain>
        <tissue>Embryo</tissue>
    </source>
</reference>
<reference key="2">
    <citation type="journal article" date="2010" name="Cell">
        <title>A tissue-specific atlas of mouse protein phosphorylation and expression.</title>
        <authorList>
            <person name="Huttlin E.L."/>
            <person name="Jedrychowski M.P."/>
            <person name="Elias J.E."/>
            <person name="Goswami T."/>
            <person name="Rad R."/>
            <person name="Beausoleil S.A."/>
            <person name="Villen J."/>
            <person name="Haas W."/>
            <person name="Sowa M.E."/>
            <person name="Gygi S.P."/>
        </authorList>
    </citation>
    <scope>IDENTIFICATION BY MASS SPECTROMETRY [LARGE SCALE ANALYSIS]</scope>
    <source>
        <tissue>Spleen</tissue>
        <tissue>Testis</tissue>
    </source>
</reference>
<proteinExistence type="evidence at protein level"/>
<comment type="function">
    <text evidence="1">Subunit of the replication factor C (RFC) complex which acts during elongation of primed DNA templates by DNA polymerases delta and epsilon, and is necessary for ATP-dependent loading of proliferating cell nuclear antigen (PCNA) onto primed DNA.</text>
</comment>
<comment type="subunit">
    <text evidence="1">Subunit of the RFC complex, an heteropentameric complex consisting of a large subunit RFC1 and four small subunits RFC2, RFC3, RFC4 and RFC5; the RFC complex interacts with PCNA. Forms an heterotetrameric complex with RFC2, RFC3 and RFC4; this complex has ATPase activity but is not stimulated by PCNA. The heterotetramer of subunits RFC2, RFC3, RFC4 and RFC5 interacts with RAD17.</text>
</comment>
<comment type="subcellular location">
    <subcellularLocation>
        <location evidence="3">Nucleus</location>
    </subcellularLocation>
</comment>
<comment type="similarity">
    <text evidence="3">Belongs to the activator 1 small subunits family.</text>
</comment>
<evidence type="ECO:0000250" key="1">
    <source>
        <dbReference type="UniProtKB" id="P40937"/>
    </source>
</evidence>
<evidence type="ECO:0000255" key="2"/>
<evidence type="ECO:0000305" key="3"/>
<protein>
    <recommendedName>
        <fullName>Replication factor C subunit 5</fullName>
    </recommendedName>
    <alternativeName>
        <fullName>Activator 1 36 kDa subunit</fullName>
        <shortName>A1 36 kDa subunit</shortName>
    </alternativeName>
    <alternativeName>
        <fullName>Activator 1 subunit 5</fullName>
    </alternativeName>
    <alternativeName>
        <fullName>Replication factor C 36 kDa subunit</fullName>
        <shortName>RF-C 36 kDa subunit</shortName>
        <shortName>RFC36</shortName>
    </alternativeName>
</protein>
<accession>Q9D0F6</accession>
<organism>
    <name type="scientific">Mus musculus</name>
    <name type="common">Mouse</name>
    <dbReference type="NCBI Taxonomy" id="10090"/>
    <lineage>
        <taxon>Eukaryota</taxon>
        <taxon>Metazoa</taxon>
        <taxon>Chordata</taxon>
        <taxon>Craniata</taxon>
        <taxon>Vertebrata</taxon>
        <taxon>Euteleostomi</taxon>
        <taxon>Mammalia</taxon>
        <taxon>Eutheria</taxon>
        <taxon>Euarchontoglires</taxon>
        <taxon>Glires</taxon>
        <taxon>Rodentia</taxon>
        <taxon>Myomorpha</taxon>
        <taxon>Muroidea</taxon>
        <taxon>Muridae</taxon>
        <taxon>Murinae</taxon>
        <taxon>Mus</taxon>
        <taxon>Mus</taxon>
    </lineage>
</organism>
<keyword id="KW-0067">ATP-binding</keyword>
<keyword id="KW-0235">DNA replication</keyword>
<keyword id="KW-0547">Nucleotide-binding</keyword>
<keyword id="KW-0539">Nucleus</keyword>
<keyword id="KW-1185">Reference proteome</keyword>
<name>RFC5_MOUSE</name>
<feature type="chain" id="PRO_0000121752" description="Replication factor C subunit 5">
    <location>
        <begin position="1"/>
        <end position="339"/>
    </location>
</feature>
<feature type="binding site" evidence="2">
    <location>
        <begin position="59"/>
        <end position="66"/>
    </location>
    <ligand>
        <name>ATP</name>
        <dbReference type="ChEBI" id="CHEBI:30616"/>
    </ligand>
</feature>
<dbReference type="EMBL" id="AK011489">
    <property type="protein sequence ID" value="BAB27652.1"/>
    <property type="molecule type" value="mRNA"/>
</dbReference>
<dbReference type="CCDS" id="CCDS39235.1"/>
<dbReference type="RefSeq" id="NP_082404.1">
    <property type="nucleotide sequence ID" value="NM_028128.1"/>
</dbReference>
<dbReference type="SMR" id="Q9D0F6"/>
<dbReference type="BioGRID" id="215186">
    <property type="interactions" value="13"/>
</dbReference>
<dbReference type="ComplexPortal" id="CPX-472">
    <property type="entry name" value="DNA replication factor C complex"/>
</dbReference>
<dbReference type="CORUM" id="Q9D0F6"/>
<dbReference type="FunCoup" id="Q9D0F6">
    <property type="interactions" value="2577"/>
</dbReference>
<dbReference type="IntAct" id="Q9D0F6">
    <property type="interactions" value="3"/>
</dbReference>
<dbReference type="MINT" id="Q9D0F6"/>
<dbReference type="STRING" id="10090.ENSMUSP00000083652"/>
<dbReference type="iPTMnet" id="Q9D0F6"/>
<dbReference type="PhosphoSitePlus" id="Q9D0F6"/>
<dbReference type="PaxDb" id="10090-ENSMUSP00000083652"/>
<dbReference type="ProteomicsDB" id="255293"/>
<dbReference type="Pumba" id="Q9D0F6"/>
<dbReference type="Antibodypedia" id="18857">
    <property type="antibodies" value="124 antibodies from 30 providers"/>
</dbReference>
<dbReference type="Ensembl" id="ENSMUST00000086461.13">
    <property type="protein sequence ID" value="ENSMUSP00000083652.7"/>
    <property type="gene ID" value="ENSMUSG00000029363.15"/>
</dbReference>
<dbReference type="GeneID" id="72151"/>
<dbReference type="KEGG" id="mmu:72151"/>
<dbReference type="UCSC" id="uc008zfs.1">
    <property type="organism name" value="mouse"/>
</dbReference>
<dbReference type="AGR" id="MGI:1919401"/>
<dbReference type="CTD" id="5985"/>
<dbReference type="MGI" id="MGI:1919401">
    <property type="gene designation" value="Rfc5"/>
</dbReference>
<dbReference type="VEuPathDB" id="HostDB:ENSMUSG00000029363"/>
<dbReference type="eggNOG" id="KOG0990">
    <property type="taxonomic scope" value="Eukaryota"/>
</dbReference>
<dbReference type="GeneTree" id="ENSGT00550000075072"/>
<dbReference type="HOGENOM" id="CLU_042324_2_0_1"/>
<dbReference type="InParanoid" id="Q9D0F6"/>
<dbReference type="OMA" id="AEDNLPW"/>
<dbReference type="OrthoDB" id="10254700at2759"/>
<dbReference type="PhylomeDB" id="Q9D0F6"/>
<dbReference type="TreeFam" id="TF300810"/>
<dbReference type="Reactome" id="R-MMU-110312">
    <property type="pathway name" value="Translesion synthesis by REV1"/>
</dbReference>
<dbReference type="Reactome" id="R-MMU-110314">
    <property type="pathway name" value="Recognition of DNA damage by PCNA-containing replication complex"/>
</dbReference>
<dbReference type="Reactome" id="R-MMU-110320">
    <property type="pathway name" value="Translesion Synthesis by POLH"/>
</dbReference>
<dbReference type="Reactome" id="R-MMU-174411">
    <property type="pathway name" value="Polymerase switching on the C-strand of the telomere"/>
</dbReference>
<dbReference type="Reactome" id="R-MMU-176187">
    <property type="pathway name" value="Activation of ATR in response to replication stress"/>
</dbReference>
<dbReference type="Reactome" id="R-MMU-5651801">
    <property type="pathway name" value="PCNA-Dependent Long Patch Base Excision Repair"/>
</dbReference>
<dbReference type="Reactome" id="R-MMU-5655862">
    <property type="pathway name" value="Translesion synthesis by POLK"/>
</dbReference>
<dbReference type="Reactome" id="R-MMU-5656121">
    <property type="pathway name" value="Translesion synthesis by POLI"/>
</dbReference>
<dbReference type="Reactome" id="R-MMU-5656169">
    <property type="pathway name" value="Termination of translesion DNA synthesis"/>
</dbReference>
<dbReference type="Reactome" id="R-MMU-5685938">
    <property type="pathway name" value="HDR through Single Strand Annealing (SSA)"/>
</dbReference>
<dbReference type="Reactome" id="R-MMU-5685942">
    <property type="pathway name" value="HDR through Homologous Recombination (HRR)"/>
</dbReference>
<dbReference type="Reactome" id="R-MMU-5693607">
    <property type="pathway name" value="Processing of DNA double-strand break ends"/>
</dbReference>
<dbReference type="Reactome" id="R-MMU-5696397">
    <property type="pathway name" value="Gap-filling DNA repair synthesis and ligation in GG-NER"/>
</dbReference>
<dbReference type="Reactome" id="R-MMU-5696400">
    <property type="pathway name" value="Dual Incision in GG-NER"/>
</dbReference>
<dbReference type="Reactome" id="R-MMU-6782135">
    <property type="pathway name" value="Dual incision in TC-NER"/>
</dbReference>
<dbReference type="Reactome" id="R-MMU-6782210">
    <property type="pathway name" value="Gap-filling DNA repair synthesis and ligation in TC-NER"/>
</dbReference>
<dbReference type="Reactome" id="R-MMU-6804756">
    <property type="pathway name" value="Regulation of TP53 Activity through Phosphorylation"/>
</dbReference>
<dbReference type="Reactome" id="R-MMU-69091">
    <property type="pathway name" value="Polymerase switching"/>
</dbReference>
<dbReference type="Reactome" id="R-MMU-69473">
    <property type="pathway name" value="G2/M DNA damage checkpoint"/>
</dbReference>
<dbReference type="BioGRID-ORCS" id="72151">
    <property type="hits" value="29 hits in 77 CRISPR screens"/>
</dbReference>
<dbReference type="PRO" id="PR:Q9D0F6"/>
<dbReference type="Proteomes" id="UP000000589">
    <property type="component" value="Chromosome 5"/>
</dbReference>
<dbReference type="RNAct" id="Q9D0F6">
    <property type="molecule type" value="protein"/>
</dbReference>
<dbReference type="Bgee" id="ENSMUSG00000029363">
    <property type="expression patterns" value="Expressed in epiblast (generic) and 67 other cell types or tissues"/>
</dbReference>
<dbReference type="ExpressionAtlas" id="Q9D0F6">
    <property type="expression patterns" value="baseline and differential"/>
</dbReference>
<dbReference type="GO" id="GO:0031390">
    <property type="term" value="C:Ctf18 RFC-like complex"/>
    <property type="evidence" value="ECO:0000250"/>
    <property type="project" value="UniProtKB"/>
</dbReference>
<dbReference type="GO" id="GO:0005663">
    <property type="term" value="C:DNA replication factor C complex"/>
    <property type="evidence" value="ECO:0000266"/>
    <property type="project" value="ComplexPortal"/>
</dbReference>
<dbReference type="GO" id="GO:0005524">
    <property type="term" value="F:ATP binding"/>
    <property type="evidence" value="ECO:0007669"/>
    <property type="project" value="UniProtKB-KW"/>
</dbReference>
<dbReference type="GO" id="GO:0016887">
    <property type="term" value="F:ATP hydrolysis activity"/>
    <property type="evidence" value="ECO:0007669"/>
    <property type="project" value="InterPro"/>
</dbReference>
<dbReference type="GO" id="GO:0003677">
    <property type="term" value="F:DNA binding"/>
    <property type="evidence" value="ECO:0007669"/>
    <property type="project" value="InterPro"/>
</dbReference>
<dbReference type="GO" id="GO:0003689">
    <property type="term" value="F:DNA clamp loader activity"/>
    <property type="evidence" value="ECO:0007669"/>
    <property type="project" value="Ensembl"/>
</dbReference>
<dbReference type="GO" id="GO:0019899">
    <property type="term" value="F:enzyme binding"/>
    <property type="evidence" value="ECO:0000353"/>
    <property type="project" value="BHF-UCL"/>
</dbReference>
<dbReference type="GO" id="GO:0017116">
    <property type="term" value="F:single-stranded DNA helicase activity"/>
    <property type="evidence" value="ECO:0007669"/>
    <property type="project" value="Ensembl"/>
</dbReference>
<dbReference type="GO" id="GO:0006261">
    <property type="term" value="P:DNA-templated DNA replication"/>
    <property type="evidence" value="ECO:0000266"/>
    <property type="project" value="ComplexPortal"/>
</dbReference>
<dbReference type="GO" id="GO:1900264">
    <property type="term" value="P:positive regulation of DNA-directed DNA polymerase activity"/>
    <property type="evidence" value="ECO:0000250"/>
    <property type="project" value="UniProtKB"/>
</dbReference>
<dbReference type="CDD" id="cd00009">
    <property type="entry name" value="AAA"/>
    <property type="match status" value="1"/>
</dbReference>
<dbReference type="CDD" id="cd18140">
    <property type="entry name" value="HLD_clamp_RFC"/>
    <property type="match status" value="1"/>
</dbReference>
<dbReference type="FunFam" id="3.40.50.300:FF:001637">
    <property type="entry name" value="replication factor C subunit 2 isoform X2"/>
    <property type="match status" value="1"/>
</dbReference>
<dbReference type="FunFam" id="1.10.8.60:FF:000028">
    <property type="entry name" value="Replication factor C subunit 5"/>
    <property type="match status" value="1"/>
</dbReference>
<dbReference type="FunFam" id="1.20.272.10:FF:000004">
    <property type="entry name" value="Replication factor C subunit 5"/>
    <property type="match status" value="1"/>
</dbReference>
<dbReference type="FunFam" id="3.40.50.300:FF:001987">
    <property type="entry name" value="replication factor C subunit 5 isoform X2"/>
    <property type="match status" value="1"/>
</dbReference>
<dbReference type="Gene3D" id="1.10.8.60">
    <property type="match status" value="1"/>
</dbReference>
<dbReference type="Gene3D" id="1.20.272.10">
    <property type="match status" value="1"/>
</dbReference>
<dbReference type="Gene3D" id="3.40.50.300">
    <property type="entry name" value="P-loop containing nucleotide triphosphate hydrolases"/>
    <property type="match status" value="1"/>
</dbReference>
<dbReference type="InterPro" id="IPR003593">
    <property type="entry name" value="AAA+_ATPase"/>
</dbReference>
<dbReference type="InterPro" id="IPR003959">
    <property type="entry name" value="ATPase_AAA_core"/>
</dbReference>
<dbReference type="InterPro" id="IPR008921">
    <property type="entry name" value="DNA_pol3_clamp-load_cplx_C"/>
</dbReference>
<dbReference type="InterPro" id="IPR050238">
    <property type="entry name" value="DNA_Rep/Repair_Clamp_Loader"/>
</dbReference>
<dbReference type="InterPro" id="IPR027417">
    <property type="entry name" value="P-loop_NTPase"/>
</dbReference>
<dbReference type="InterPro" id="IPR013748">
    <property type="entry name" value="Rep_factorC_C"/>
</dbReference>
<dbReference type="InterPro" id="IPR047854">
    <property type="entry name" value="RFC_lid"/>
</dbReference>
<dbReference type="NCBIfam" id="NF001679">
    <property type="entry name" value="PRK00440.1"/>
    <property type="match status" value="1"/>
</dbReference>
<dbReference type="PANTHER" id="PTHR11669">
    <property type="entry name" value="REPLICATION FACTOR C / DNA POLYMERASE III GAMMA-TAU SUBUNIT"/>
    <property type="match status" value="1"/>
</dbReference>
<dbReference type="PANTHER" id="PTHR11669:SF9">
    <property type="entry name" value="REPLICATION FACTOR C SUBUNIT 5"/>
    <property type="match status" value="1"/>
</dbReference>
<dbReference type="Pfam" id="PF00004">
    <property type="entry name" value="AAA"/>
    <property type="match status" value="1"/>
</dbReference>
<dbReference type="Pfam" id="PF21960">
    <property type="entry name" value="RCF1-5-like_lid"/>
    <property type="match status" value="1"/>
</dbReference>
<dbReference type="Pfam" id="PF08542">
    <property type="entry name" value="Rep_fac_C"/>
    <property type="match status" value="1"/>
</dbReference>
<dbReference type="SMART" id="SM00382">
    <property type="entry name" value="AAA"/>
    <property type="match status" value="1"/>
</dbReference>
<dbReference type="SUPFAM" id="SSF52540">
    <property type="entry name" value="P-loop containing nucleoside triphosphate hydrolases"/>
    <property type="match status" value="1"/>
</dbReference>
<dbReference type="SUPFAM" id="SSF48019">
    <property type="entry name" value="post-AAA+ oligomerization domain-like"/>
    <property type="match status" value="1"/>
</dbReference>